<evidence type="ECO:0000255" key="1">
    <source>
        <dbReference type="HAMAP-Rule" id="MF_00176"/>
    </source>
</evidence>
<organism>
    <name type="scientific">Desulfurococcus amylolyticus (strain DSM 18924 / JCM 16383 / VKM B-2413 / 1221n)</name>
    <name type="common">Desulfurococcus kamchatkensis</name>
    <dbReference type="NCBI Taxonomy" id="490899"/>
    <lineage>
        <taxon>Archaea</taxon>
        <taxon>Thermoproteota</taxon>
        <taxon>Thermoprotei</taxon>
        <taxon>Desulfurococcales</taxon>
        <taxon>Desulfurococcaceae</taxon>
        <taxon>Desulfurococcus</taxon>
    </lineage>
</organism>
<protein>
    <recommendedName>
        <fullName evidence="1">Serine--tRNA ligase</fullName>
        <ecNumber evidence="1">6.1.1.11</ecNumber>
    </recommendedName>
    <alternativeName>
        <fullName evidence="1">Seryl-tRNA synthetase</fullName>
        <shortName evidence="1">SerRS</shortName>
    </alternativeName>
    <alternativeName>
        <fullName evidence="1">Seryl-tRNA(Ser/Sec) synthetase</fullName>
    </alternativeName>
</protein>
<sequence length="459" mass="53298">MSWSILTLLRDNPELLKEHVKKRFMDPSLVDEAYKLDLEWRRLLSQVQELRHRHNVISRDISKLPEPERSARINEARELLSQMEELEKKLKEIEDLREEALLKLPNIVHETVPVGPDDTYNVPIRFWGKPKVWSGYIEQFMQQTERYGFKVEYELVNWKPVGHADMLEYVLRLGDTVKAGEVAGSRFYYLFDDIVFLDIALLMYAIDSLTSKGYKLVLPPYMLRHKVMSGVIDLATFKDAIYKIEGEDLYLIATAEHSLAALHAFEEIPEEELPLKYVGVSPCFRKEAGAGNRDLKGIFRVHQFHKVEQYVYAKPEESWALMEELIGNAEDLFKGLELPYRVVNIASGDLGAPAAKKYDLETWMPAQGLFREMVSCSNTTDWQSYRLKTRLVRRKGMVKEYVHTLNSTAIASTRTITSILENRQNEDGTVTVPRVLRKYLEVFNKAPRDYIHPVKRERA</sequence>
<accession>B8D3V1</accession>
<reference key="1">
    <citation type="journal article" date="2009" name="J. Bacteriol.">
        <title>Complete genome sequence of the anaerobic, protein-degrading hyperthermophilic crenarchaeon Desulfurococcus kamchatkensis.</title>
        <authorList>
            <person name="Ravin N.V."/>
            <person name="Mardanov A.V."/>
            <person name="Beletsky A.V."/>
            <person name="Kublanov I.V."/>
            <person name="Kolganova T.V."/>
            <person name="Lebedinsky A.V."/>
            <person name="Chernyh N.A."/>
            <person name="Bonch-Osmolovskaya E.A."/>
            <person name="Skryabin K.G."/>
        </authorList>
    </citation>
    <scope>NUCLEOTIDE SEQUENCE [LARGE SCALE GENOMIC DNA]</scope>
    <source>
        <strain>DSM 18924 / JCM 16383 / VKM B-2413 / 1221n</strain>
    </source>
</reference>
<name>SYS_DESA1</name>
<comment type="function">
    <text evidence="1">Catalyzes the attachment of serine to tRNA(Ser). Is also able to aminoacylate tRNA(Sec) with serine, to form the misacylated tRNA L-seryl-tRNA(Sec), which will be further converted into selenocysteinyl-tRNA(Sec).</text>
</comment>
<comment type="catalytic activity">
    <reaction evidence="1">
        <text>tRNA(Ser) + L-serine + ATP = L-seryl-tRNA(Ser) + AMP + diphosphate + H(+)</text>
        <dbReference type="Rhea" id="RHEA:12292"/>
        <dbReference type="Rhea" id="RHEA-COMP:9669"/>
        <dbReference type="Rhea" id="RHEA-COMP:9703"/>
        <dbReference type="ChEBI" id="CHEBI:15378"/>
        <dbReference type="ChEBI" id="CHEBI:30616"/>
        <dbReference type="ChEBI" id="CHEBI:33019"/>
        <dbReference type="ChEBI" id="CHEBI:33384"/>
        <dbReference type="ChEBI" id="CHEBI:78442"/>
        <dbReference type="ChEBI" id="CHEBI:78533"/>
        <dbReference type="ChEBI" id="CHEBI:456215"/>
        <dbReference type="EC" id="6.1.1.11"/>
    </reaction>
</comment>
<comment type="catalytic activity">
    <reaction evidence="1">
        <text>tRNA(Sec) + L-serine + ATP = L-seryl-tRNA(Sec) + AMP + diphosphate + H(+)</text>
        <dbReference type="Rhea" id="RHEA:42580"/>
        <dbReference type="Rhea" id="RHEA-COMP:9742"/>
        <dbReference type="Rhea" id="RHEA-COMP:10128"/>
        <dbReference type="ChEBI" id="CHEBI:15378"/>
        <dbReference type="ChEBI" id="CHEBI:30616"/>
        <dbReference type="ChEBI" id="CHEBI:33019"/>
        <dbReference type="ChEBI" id="CHEBI:33384"/>
        <dbReference type="ChEBI" id="CHEBI:78442"/>
        <dbReference type="ChEBI" id="CHEBI:78533"/>
        <dbReference type="ChEBI" id="CHEBI:456215"/>
        <dbReference type="EC" id="6.1.1.11"/>
    </reaction>
</comment>
<comment type="pathway">
    <text evidence="1">Aminoacyl-tRNA biosynthesis; selenocysteinyl-tRNA(Sec) biosynthesis; L-seryl-tRNA(Sec) from L-serine and tRNA(Sec): step 1/1.</text>
</comment>
<comment type="subunit">
    <text evidence="1">Homodimer. The tRNA molecule binds across the dimer.</text>
</comment>
<comment type="subcellular location">
    <subcellularLocation>
        <location evidence="1">Cytoplasm</location>
    </subcellularLocation>
</comment>
<comment type="domain">
    <text evidence="1">Consists of two distinct domains, a catalytic core and a N-terminal extension that is involved in tRNA binding.</text>
</comment>
<comment type="similarity">
    <text evidence="1">Belongs to the class-II aminoacyl-tRNA synthetase family. Type-1 seryl-tRNA synthetase subfamily.</text>
</comment>
<keyword id="KW-0030">Aminoacyl-tRNA synthetase</keyword>
<keyword id="KW-0067">ATP-binding</keyword>
<keyword id="KW-0963">Cytoplasm</keyword>
<keyword id="KW-0436">Ligase</keyword>
<keyword id="KW-0547">Nucleotide-binding</keyword>
<keyword id="KW-0648">Protein biosynthesis</keyword>
<dbReference type="EC" id="6.1.1.11" evidence="1"/>
<dbReference type="EMBL" id="CP001140">
    <property type="protein sequence ID" value="ACL10782.1"/>
    <property type="molecule type" value="Genomic_DNA"/>
</dbReference>
<dbReference type="RefSeq" id="WP_012608124.1">
    <property type="nucleotide sequence ID" value="NC_011766.1"/>
</dbReference>
<dbReference type="SMR" id="B8D3V1"/>
<dbReference type="STRING" id="490899.DKAM_0456"/>
<dbReference type="GeneID" id="7170692"/>
<dbReference type="KEGG" id="dka:DKAM_0456"/>
<dbReference type="eggNOG" id="arCOG00403">
    <property type="taxonomic scope" value="Archaea"/>
</dbReference>
<dbReference type="HOGENOM" id="CLU_023797_0_1_2"/>
<dbReference type="UniPathway" id="UPA00906">
    <property type="reaction ID" value="UER00895"/>
</dbReference>
<dbReference type="Proteomes" id="UP000006903">
    <property type="component" value="Chromosome"/>
</dbReference>
<dbReference type="GO" id="GO:0005737">
    <property type="term" value="C:cytoplasm"/>
    <property type="evidence" value="ECO:0007669"/>
    <property type="project" value="UniProtKB-SubCell"/>
</dbReference>
<dbReference type="GO" id="GO:0005524">
    <property type="term" value="F:ATP binding"/>
    <property type="evidence" value="ECO:0007669"/>
    <property type="project" value="UniProtKB-UniRule"/>
</dbReference>
<dbReference type="GO" id="GO:0004828">
    <property type="term" value="F:serine-tRNA ligase activity"/>
    <property type="evidence" value="ECO:0007669"/>
    <property type="project" value="UniProtKB-UniRule"/>
</dbReference>
<dbReference type="GO" id="GO:0016260">
    <property type="term" value="P:selenocysteine biosynthetic process"/>
    <property type="evidence" value="ECO:0007669"/>
    <property type="project" value="UniProtKB-UniRule"/>
</dbReference>
<dbReference type="GO" id="GO:0006434">
    <property type="term" value="P:seryl-tRNA aminoacylation"/>
    <property type="evidence" value="ECO:0007669"/>
    <property type="project" value="UniProtKB-UniRule"/>
</dbReference>
<dbReference type="CDD" id="cd00770">
    <property type="entry name" value="SerRS_core"/>
    <property type="match status" value="1"/>
</dbReference>
<dbReference type="FunFam" id="3.30.930.10:FF:000048">
    <property type="entry name" value="Serine--tRNA ligase"/>
    <property type="match status" value="1"/>
</dbReference>
<dbReference type="Gene3D" id="3.30.930.10">
    <property type="entry name" value="Bira Bifunctional Protein, Domain 2"/>
    <property type="match status" value="1"/>
</dbReference>
<dbReference type="Gene3D" id="1.10.287.40">
    <property type="entry name" value="Serine-tRNA synthetase, tRNA binding domain"/>
    <property type="match status" value="1"/>
</dbReference>
<dbReference type="HAMAP" id="MF_00176">
    <property type="entry name" value="Ser_tRNA_synth_type1"/>
    <property type="match status" value="1"/>
</dbReference>
<dbReference type="InterPro" id="IPR002314">
    <property type="entry name" value="aa-tRNA-synt_IIb"/>
</dbReference>
<dbReference type="InterPro" id="IPR006195">
    <property type="entry name" value="aa-tRNA-synth_II"/>
</dbReference>
<dbReference type="InterPro" id="IPR045864">
    <property type="entry name" value="aa-tRNA-synth_II/BPL/LPL"/>
</dbReference>
<dbReference type="InterPro" id="IPR002317">
    <property type="entry name" value="Ser-tRNA-ligase_type_1"/>
</dbReference>
<dbReference type="InterPro" id="IPR015866">
    <property type="entry name" value="Ser-tRNA-synth_1_N"/>
</dbReference>
<dbReference type="InterPro" id="IPR042103">
    <property type="entry name" value="SerRS_1_N_sf"/>
</dbReference>
<dbReference type="InterPro" id="IPR033729">
    <property type="entry name" value="SerRS_core"/>
</dbReference>
<dbReference type="InterPro" id="IPR010978">
    <property type="entry name" value="tRNA-bd_arm"/>
</dbReference>
<dbReference type="NCBIfam" id="TIGR00414">
    <property type="entry name" value="serS"/>
    <property type="match status" value="1"/>
</dbReference>
<dbReference type="PANTHER" id="PTHR11778">
    <property type="entry name" value="SERYL-TRNA SYNTHETASE"/>
    <property type="match status" value="1"/>
</dbReference>
<dbReference type="Pfam" id="PF02403">
    <property type="entry name" value="Seryl_tRNA_N"/>
    <property type="match status" value="1"/>
</dbReference>
<dbReference type="Pfam" id="PF00587">
    <property type="entry name" value="tRNA-synt_2b"/>
    <property type="match status" value="1"/>
</dbReference>
<dbReference type="PIRSF" id="PIRSF001529">
    <property type="entry name" value="Ser-tRNA-synth_IIa"/>
    <property type="match status" value="1"/>
</dbReference>
<dbReference type="PRINTS" id="PR00981">
    <property type="entry name" value="TRNASYNTHSER"/>
</dbReference>
<dbReference type="SUPFAM" id="SSF55681">
    <property type="entry name" value="Class II aaRS and biotin synthetases"/>
    <property type="match status" value="1"/>
</dbReference>
<dbReference type="SUPFAM" id="SSF46589">
    <property type="entry name" value="tRNA-binding arm"/>
    <property type="match status" value="1"/>
</dbReference>
<dbReference type="PROSITE" id="PS50862">
    <property type="entry name" value="AA_TRNA_LIGASE_II"/>
    <property type="match status" value="1"/>
</dbReference>
<feature type="chain" id="PRO_1000199518" description="Serine--tRNA ligase">
    <location>
        <begin position="1"/>
        <end position="459"/>
    </location>
</feature>
<feature type="binding site" evidence="1">
    <location>
        <begin position="254"/>
        <end position="256"/>
    </location>
    <ligand>
        <name>L-serine</name>
        <dbReference type="ChEBI" id="CHEBI:33384"/>
    </ligand>
</feature>
<feature type="binding site" evidence="1">
    <location>
        <begin position="285"/>
        <end position="287"/>
    </location>
    <ligand>
        <name>ATP</name>
        <dbReference type="ChEBI" id="CHEBI:30616"/>
    </ligand>
</feature>
<feature type="binding site" evidence="1">
    <location>
        <position position="301"/>
    </location>
    <ligand>
        <name>ATP</name>
        <dbReference type="ChEBI" id="CHEBI:30616"/>
    </ligand>
</feature>
<feature type="binding site" evidence="1">
    <location>
        <position position="308"/>
    </location>
    <ligand>
        <name>L-serine</name>
        <dbReference type="ChEBI" id="CHEBI:33384"/>
    </ligand>
</feature>
<feature type="binding site" evidence="1">
    <location>
        <begin position="372"/>
        <end position="375"/>
    </location>
    <ligand>
        <name>ATP</name>
        <dbReference type="ChEBI" id="CHEBI:30616"/>
    </ligand>
</feature>
<feature type="binding site" evidence="1">
    <location>
        <position position="408"/>
    </location>
    <ligand>
        <name>L-serine</name>
        <dbReference type="ChEBI" id="CHEBI:33384"/>
    </ligand>
</feature>
<proteinExistence type="inferred from homology"/>
<gene>
    <name evidence="1" type="primary">serS</name>
    <name type="ordered locus">DKAM_0456</name>
</gene>